<accession>P47232</accession>
<feature type="initiator methionine" description="Removed" evidence="3">
    <location>
        <position position="1"/>
    </location>
</feature>
<feature type="chain" id="PRO_0000085038" description="Biphenyl-2,3-diol 1,2-dioxygenase 2">
    <location>
        <begin position="2"/>
        <end position="190"/>
    </location>
</feature>
<feature type="domain" description="VOC" evidence="2">
    <location>
        <begin position="6"/>
        <end position="124"/>
    </location>
</feature>
<feature type="binding site" evidence="1">
    <location>
        <position position="9"/>
    </location>
    <ligand>
        <name>Fe cation</name>
        <dbReference type="ChEBI" id="CHEBI:24875"/>
    </ligand>
</feature>
<feature type="binding site" evidence="1">
    <location>
        <position position="72"/>
    </location>
    <ligand>
        <name>Fe cation</name>
        <dbReference type="ChEBI" id="CHEBI:24875"/>
    </ligand>
</feature>
<feature type="binding site" evidence="1">
    <location>
        <position position="120"/>
    </location>
    <ligand>
        <name>Fe cation</name>
        <dbReference type="ChEBI" id="CHEBI:24875"/>
    </ligand>
</feature>
<organism>
    <name type="scientific">Rhodococcus globerulus</name>
    <dbReference type="NCBI Taxonomy" id="33008"/>
    <lineage>
        <taxon>Bacteria</taxon>
        <taxon>Bacillati</taxon>
        <taxon>Actinomycetota</taxon>
        <taxon>Actinomycetes</taxon>
        <taxon>Mycobacteriales</taxon>
        <taxon>Nocardiaceae</taxon>
        <taxon>Rhodococcus</taxon>
    </lineage>
</organism>
<dbReference type="EC" id="1.13.11.39"/>
<dbReference type="EMBL" id="X75634">
    <property type="protein sequence ID" value="CAA53298.1"/>
    <property type="molecule type" value="Genomic_DNA"/>
</dbReference>
<dbReference type="PIR" id="C53419">
    <property type="entry name" value="C53419"/>
</dbReference>
<dbReference type="SMR" id="P47232"/>
<dbReference type="UniPathway" id="UPA00155">
    <property type="reaction ID" value="UER00252"/>
</dbReference>
<dbReference type="GO" id="GO:0018583">
    <property type="term" value="F:biphenyl-2,3-diol 1,2-dioxygenase activity"/>
    <property type="evidence" value="ECO:0007669"/>
    <property type="project" value="UniProtKB-EC"/>
</dbReference>
<dbReference type="GO" id="GO:0008198">
    <property type="term" value="F:ferrous iron binding"/>
    <property type="evidence" value="ECO:0007669"/>
    <property type="project" value="InterPro"/>
</dbReference>
<dbReference type="GO" id="GO:0009056">
    <property type="term" value="P:catabolic process"/>
    <property type="evidence" value="ECO:0007669"/>
    <property type="project" value="UniProtKB-KW"/>
</dbReference>
<dbReference type="Gene3D" id="3.10.180.10">
    <property type="entry name" value="2,3-Dihydroxybiphenyl 1,2-Dioxygenase, domain 1"/>
    <property type="match status" value="1"/>
</dbReference>
<dbReference type="InterPro" id="IPR029068">
    <property type="entry name" value="Glyas_Bleomycin-R_OHBP_Dase"/>
</dbReference>
<dbReference type="InterPro" id="IPR004360">
    <property type="entry name" value="Glyas_Fos-R_dOase_dom"/>
</dbReference>
<dbReference type="InterPro" id="IPR037523">
    <property type="entry name" value="VOC"/>
</dbReference>
<dbReference type="InterPro" id="IPR000486">
    <property type="entry name" value="Xdiol_ring_cleave_dOase_1/2"/>
</dbReference>
<dbReference type="Pfam" id="PF00903">
    <property type="entry name" value="Glyoxalase"/>
    <property type="match status" value="1"/>
</dbReference>
<dbReference type="SUPFAM" id="SSF54593">
    <property type="entry name" value="Glyoxalase/Bleomycin resistance protein/Dihydroxybiphenyl dioxygenase"/>
    <property type="match status" value="1"/>
</dbReference>
<dbReference type="PROSITE" id="PS00082">
    <property type="entry name" value="EXTRADIOL_DIOXYGENAS"/>
    <property type="match status" value="1"/>
</dbReference>
<dbReference type="PROSITE" id="PS51819">
    <property type="entry name" value="VOC"/>
    <property type="match status" value="1"/>
</dbReference>
<comment type="catalytic activity">
    <reaction>
        <text>biphenyl-2,3-diol + O2 = 2-hydroxy-6-oxo-6-phenylhexa-2,4-dienoate + H(+)</text>
        <dbReference type="Rhea" id="RHEA:14413"/>
        <dbReference type="ChEBI" id="CHEBI:15378"/>
        <dbReference type="ChEBI" id="CHEBI:15379"/>
        <dbReference type="ChEBI" id="CHEBI:16205"/>
        <dbReference type="ChEBI" id="CHEBI:58284"/>
        <dbReference type="EC" id="1.13.11.39"/>
    </reaction>
</comment>
<comment type="cofactor">
    <cofactor>
        <name>Fe(2+)</name>
        <dbReference type="ChEBI" id="CHEBI:29033"/>
    </cofactor>
</comment>
<comment type="pathway">
    <text>Xenobiotic degradation; biphenyl degradation; 2-hydroxy-2,4-pentadienoate and benzoate from biphenyl: step 3/4.</text>
</comment>
<comment type="subunit">
    <text>Homohexamer.</text>
</comment>
<comment type="similarity">
    <text evidence="4">Belongs to the extradiol ring-cleavage dioxygenase family.</text>
</comment>
<protein>
    <recommendedName>
        <fullName>Biphenyl-2,3-diol 1,2-dioxygenase 2</fullName>
        <ecNumber>1.13.11.39</ecNumber>
    </recommendedName>
    <alternativeName>
        <fullName>2,3-dihydroxybiphenyl dioxygenase II</fullName>
        <shortName>DHBD II</shortName>
    </alternativeName>
    <alternativeName>
        <fullName>23OHBP oxygenase II</fullName>
    </alternativeName>
    <alternativeName>
        <fullName>Biphenyl-2,3-diol 1,2-dioxygenase II</fullName>
    </alternativeName>
</protein>
<name>BPHC2_RHOGO</name>
<sequence>MTATPKFAHVVLQTSRFEAMRDWYCTVLDAHVVYEGHGLCFITFDEEHHRVALLGAPTALEPRNPGAAGMHHTAYTFDTLGDLLDRYESLKSKGIEPKVPIQHGVTTSLYYQDPDGNFVELQIDNFSTPDEATAYMNGPEYGGNPVGVSFDPVLIPQALSAGTPVDRITTHAWALETTPDLPNPMIALTS</sequence>
<gene>
    <name type="primary">bphC2</name>
</gene>
<reference key="1">
    <citation type="journal article" date="1994" name="J. Biol. Chem.">
        <title>Analysis of three 2,3-dihydroxybiphenyl 1,2-dioxygenases found in Rhodococcus globerulus P6. Identification of a new family of extradiol dioxygenases.</title>
        <authorList>
            <person name="Asturias J.A."/>
            <person name="Eltis L.D."/>
            <person name="Prucha M."/>
            <person name="Timmis K.N."/>
        </authorList>
    </citation>
    <scope>NUCLEOTIDE SEQUENCE [GENOMIC DNA]</scope>
    <scope>PROTEIN SEQUENCE OF 2-28</scope>
    <scope>CHARACTERIZATION</scope>
    <source>
        <strain>P6</strain>
    </source>
</reference>
<keyword id="KW-0058">Aromatic hydrocarbons catabolism</keyword>
<keyword id="KW-0223">Dioxygenase</keyword>
<keyword id="KW-0903">Direct protein sequencing</keyword>
<keyword id="KW-0408">Iron</keyword>
<keyword id="KW-0479">Metal-binding</keyword>
<keyword id="KW-0560">Oxidoreductase</keyword>
<proteinExistence type="evidence at protein level"/>
<evidence type="ECO:0000250" key="1"/>
<evidence type="ECO:0000255" key="2">
    <source>
        <dbReference type="PROSITE-ProRule" id="PRU01163"/>
    </source>
</evidence>
<evidence type="ECO:0000269" key="3">
    <source>
    </source>
</evidence>
<evidence type="ECO:0000305" key="4"/>